<feature type="chain" id="PRO_0000182940" description="Deoxyuridine 5'-triphosphate nucleotidohydrolase">
    <location>
        <begin position="1"/>
        <end position="147"/>
    </location>
</feature>
<feature type="binding site" evidence="2">
    <location>
        <position position="24"/>
    </location>
    <ligand>
        <name>Mg(2+)</name>
        <dbReference type="ChEBI" id="CHEBI:18420"/>
    </ligand>
</feature>
<feature type="binding site" evidence="2">
    <location>
        <begin position="68"/>
        <end position="70"/>
    </location>
    <ligand>
        <name>dUTP</name>
        <dbReference type="ChEBI" id="CHEBI:61555"/>
    </ligand>
</feature>
<feature type="binding site" evidence="2">
    <location>
        <begin position="82"/>
        <end position="85"/>
    </location>
    <ligand>
        <name>dUTP</name>
        <dbReference type="ChEBI" id="CHEBI:61555"/>
    </ligand>
</feature>
<feature type="binding site" evidence="2">
    <location>
        <position position="88"/>
    </location>
    <ligand>
        <name>dUTP</name>
        <dbReference type="ChEBI" id="CHEBI:61555"/>
    </ligand>
</feature>
<feature type="binding site" evidence="2">
    <location>
        <position position="93"/>
    </location>
    <ligand>
        <name>dUTP</name>
        <dbReference type="ChEBI" id="CHEBI:61555"/>
    </ligand>
</feature>
<feature type="binding site" evidence="2">
    <location>
        <position position="95"/>
    </location>
    <ligand>
        <name>dUTP</name>
        <dbReference type="ChEBI" id="CHEBI:61555"/>
    </ligand>
</feature>
<feature type="binding site" evidence="2">
    <location>
        <position position="111"/>
    </location>
    <ligand>
        <name>dUTP</name>
        <dbReference type="ChEBI" id="CHEBI:61555"/>
    </ligand>
</feature>
<sequence>MFNMNINSPVRFVKETNRAKSPTRQSPGAAGYDLYSAYDYTIPPGERQLIKTDISMSMPKICYGRIAPRSGLSLKGIDIGGGVIDEDYRGNIGVILINNGKCTFNVNTGDRIAQLIYQRIYYPELEEVQSLDSTNRGDQGFGSTGLR</sequence>
<organism>
    <name type="scientific">Vaccinia virus (strain Copenhagen)</name>
    <name type="common">VACV</name>
    <dbReference type="NCBI Taxonomy" id="10249"/>
    <lineage>
        <taxon>Viruses</taxon>
        <taxon>Varidnaviria</taxon>
        <taxon>Bamfordvirae</taxon>
        <taxon>Nucleocytoviricota</taxon>
        <taxon>Pokkesviricetes</taxon>
        <taxon>Chitovirales</taxon>
        <taxon>Poxviridae</taxon>
        <taxon>Chordopoxvirinae</taxon>
        <taxon>Orthopoxvirus</taxon>
        <taxon>Vaccinia virus</taxon>
    </lineage>
</organism>
<reference key="1">
    <citation type="journal article" date="1990" name="Virology">
        <title>The complete DNA sequence of vaccinia virus.</title>
        <authorList>
            <person name="Goebel S.J."/>
            <person name="Johnson G.P."/>
            <person name="Perkus M.E."/>
            <person name="Davis S.W."/>
            <person name="Winslow J.P."/>
            <person name="Paoletti E."/>
        </authorList>
    </citation>
    <scope>NUCLEOTIDE SEQUENCE [LARGE SCALE GENOMIC DNA]</scope>
</reference>
<reference key="2">
    <citation type="journal article" date="1990" name="Virology">
        <title>Appendix to 'The complete DNA sequence of vaccinia virus'.</title>
        <authorList>
            <person name="Goebel S.J."/>
            <person name="Johnson G.P."/>
            <person name="Perkus M.E."/>
            <person name="Davis S.W."/>
            <person name="Winslow J.P."/>
            <person name="Paoletti E."/>
        </authorList>
    </citation>
    <scope>NUCLEOTIDE SEQUENCE [LARGE SCALE GENOMIC DNA]</scope>
</reference>
<comment type="function">
    <text>This enzyme is involved in nucleotide metabolism: it produces dUMP, the immediate precursor of thymidine nucleotides and it decreases the intracellular concentration of dUTP so that uracil cannot be incorporated into DNA.</text>
</comment>
<comment type="catalytic activity">
    <reaction evidence="2">
        <text>dUTP + H2O = dUMP + diphosphate + H(+)</text>
        <dbReference type="Rhea" id="RHEA:10248"/>
        <dbReference type="ChEBI" id="CHEBI:15377"/>
        <dbReference type="ChEBI" id="CHEBI:15378"/>
        <dbReference type="ChEBI" id="CHEBI:33019"/>
        <dbReference type="ChEBI" id="CHEBI:61555"/>
        <dbReference type="ChEBI" id="CHEBI:246422"/>
        <dbReference type="EC" id="3.6.1.23"/>
    </reaction>
    <physiologicalReaction direction="left-to-right" evidence="2">
        <dbReference type="Rhea" id="RHEA:10249"/>
    </physiologicalReaction>
</comment>
<comment type="cofactor">
    <cofactor evidence="1">
        <name>Mg(2+)</name>
        <dbReference type="ChEBI" id="CHEBI:18420"/>
    </cofactor>
</comment>
<comment type="induction">
    <text evidence="2">Expressed in the early phase of the viral replicative cycle.</text>
</comment>
<comment type="similarity">
    <text evidence="3">Belongs to the dUTPase family.</text>
</comment>
<comment type="caution">
    <text evidence="3">Was originally thought to be a protease-like protein (pseudoprotease).</text>
</comment>
<keyword id="KW-0244">Early protein</keyword>
<keyword id="KW-0378">Hydrolase</keyword>
<keyword id="KW-0460">Magnesium</keyword>
<keyword id="KW-0479">Metal-binding</keyword>
<keyword id="KW-0546">Nucleotide metabolism</keyword>
<keyword id="KW-1185">Reference proteome</keyword>
<name>DUT_VACCC</name>
<accession>P68634</accession>
<accession>P21035</accession>
<evidence type="ECO:0000250" key="1"/>
<evidence type="ECO:0000250" key="2">
    <source>
        <dbReference type="UniProtKB" id="P17374"/>
    </source>
</evidence>
<evidence type="ECO:0000305" key="3"/>
<dbReference type="EC" id="3.6.1.23"/>
<dbReference type="EMBL" id="M35027">
    <property type="protein sequence ID" value="AAA48015.1"/>
    <property type="molecule type" value="Genomic_DNA"/>
</dbReference>
<dbReference type="PIR" id="G42506">
    <property type="entry name" value="PRVZ7F"/>
</dbReference>
<dbReference type="SMR" id="P68634"/>
<dbReference type="Proteomes" id="UP000008269">
    <property type="component" value="Segment"/>
</dbReference>
<dbReference type="GO" id="GO:0004170">
    <property type="term" value="F:dUTP diphosphatase activity"/>
    <property type="evidence" value="ECO:0007669"/>
    <property type="project" value="UniProtKB-EC"/>
</dbReference>
<dbReference type="GO" id="GO:0000287">
    <property type="term" value="F:magnesium ion binding"/>
    <property type="evidence" value="ECO:0007669"/>
    <property type="project" value="InterPro"/>
</dbReference>
<dbReference type="GO" id="GO:0006226">
    <property type="term" value="P:dUMP biosynthetic process"/>
    <property type="evidence" value="ECO:0007669"/>
    <property type="project" value="InterPro"/>
</dbReference>
<dbReference type="GO" id="GO:0046081">
    <property type="term" value="P:dUTP catabolic process"/>
    <property type="evidence" value="ECO:0007669"/>
    <property type="project" value="InterPro"/>
</dbReference>
<dbReference type="CDD" id="cd07557">
    <property type="entry name" value="trimeric_dUTPase"/>
    <property type="match status" value="1"/>
</dbReference>
<dbReference type="Gene3D" id="2.70.40.10">
    <property type="match status" value="1"/>
</dbReference>
<dbReference type="InterPro" id="IPR008181">
    <property type="entry name" value="dUTPase"/>
</dbReference>
<dbReference type="InterPro" id="IPR029054">
    <property type="entry name" value="dUTPase-like"/>
</dbReference>
<dbReference type="InterPro" id="IPR036157">
    <property type="entry name" value="dUTPase-like_sf"/>
</dbReference>
<dbReference type="InterPro" id="IPR033704">
    <property type="entry name" value="dUTPase_trimeric"/>
</dbReference>
<dbReference type="NCBIfam" id="TIGR00576">
    <property type="entry name" value="dut"/>
    <property type="match status" value="1"/>
</dbReference>
<dbReference type="NCBIfam" id="NF001862">
    <property type="entry name" value="PRK00601.1"/>
    <property type="match status" value="1"/>
</dbReference>
<dbReference type="PANTHER" id="PTHR11241">
    <property type="entry name" value="DEOXYURIDINE 5'-TRIPHOSPHATE NUCLEOTIDOHYDROLASE"/>
    <property type="match status" value="1"/>
</dbReference>
<dbReference type="PANTHER" id="PTHR11241:SF0">
    <property type="entry name" value="DEOXYURIDINE 5'-TRIPHOSPHATE NUCLEOTIDOHYDROLASE"/>
    <property type="match status" value="1"/>
</dbReference>
<dbReference type="Pfam" id="PF00692">
    <property type="entry name" value="dUTPase"/>
    <property type="match status" value="1"/>
</dbReference>
<dbReference type="SUPFAM" id="SSF51283">
    <property type="entry name" value="dUTPase-like"/>
    <property type="match status" value="1"/>
</dbReference>
<organismHost>
    <name type="scientific">Homo sapiens</name>
    <name type="common">Human</name>
    <dbReference type="NCBI Taxonomy" id="9606"/>
</organismHost>
<protein>
    <recommendedName>
        <fullName>Deoxyuridine 5'-triphosphate nucleotidohydrolase</fullName>
        <shortName>dUTPase</shortName>
        <ecNumber>3.6.1.23</ecNumber>
    </recommendedName>
    <alternativeName>
        <fullName>dUTP pyrophosphatase</fullName>
    </alternativeName>
</protein>
<gene>
    <name type="primary">OPG046</name>
    <name type="synonym">DUT</name>
    <name type="synonym">F2L</name>
</gene>
<proteinExistence type="inferred from homology"/>